<reference key="1">
    <citation type="journal article" date="2000" name="Nucleic Acids Res.">
        <title>Genome sequences of Chlamydia trachomatis MoPn and Chlamydia pneumoniae AR39.</title>
        <authorList>
            <person name="Read T.D."/>
            <person name="Brunham R.C."/>
            <person name="Shen C."/>
            <person name="Gill S.R."/>
            <person name="Heidelberg J.F."/>
            <person name="White O."/>
            <person name="Hickey E.K."/>
            <person name="Peterson J.D."/>
            <person name="Utterback T.R."/>
            <person name="Berry K.J."/>
            <person name="Bass S."/>
            <person name="Linher K.D."/>
            <person name="Weidman J.F."/>
            <person name="Khouri H.M."/>
            <person name="Craven B."/>
            <person name="Bowman C."/>
            <person name="Dodson R.J."/>
            <person name="Gwinn M.L."/>
            <person name="Nelson W.C."/>
            <person name="DeBoy R.T."/>
            <person name="Kolonay J.F."/>
            <person name="McClarty G."/>
            <person name="Salzberg S.L."/>
            <person name="Eisen J.A."/>
            <person name="Fraser C.M."/>
        </authorList>
    </citation>
    <scope>NUCLEOTIDE SEQUENCE [LARGE SCALE GENOMIC DNA]</scope>
    <source>
        <strain>MoPn / Nigg</strain>
    </source>
</reference>
<protein>
    <recommendedName>
        <fullName evidence="1">Chromosomal replication initiator protein DnaA 2</fullName>
    </recommendedName>
</protein>
<dbReference type="EMBL" id="AE002160">
    <property type="protein sequence ID" value="AAF39386.1"/>
    <property type="molecule type" value="Genomic_DNA"/>
</dbReference>
<dbReference type="PIR" id="G81689">
    <property type="entry name" value="G81689"/>
</dbReference>
<dbReference type="SMR" id="Q9PKB9"/>
<dbReference type="GeneID" id="1245907"/>
<dbReference type="KEGG" id="cmu:TC_0547"/>
<dbReference type="eggNOG" id="COG0593">
    <property type="taxonomic scope" value="Bacteria"/>
</dbReference>
<dbReference type="HOGENOM" id="CLU_026910_3_1_0"/>
<dbReference type="OrthoDB" id="9807019at2"/>
<dbReference type="Proteomes" id="UP000000800">
    <property type="component" value="Chromosome"/>
</dbReference>
<dbReference type="GO" id="GO:0005737">
    <property type="term" value="C:cytoplasm"/>
    <property type="evidence" value="ECO:0007669"/>
    <property type="project" value="UniProtKB-SubCell"/>
</dbReference>
<dbReference type="GO" id="GO:0005886">
    <property type="term" value="C:plasma membrane"/>
    <property type="evidence" value="ECO:0007669"/>
    <property type="project" value="TreeGrafter"/>
</dbReference>
<dbReference type="GO" id="GO:0005524">
    <property type="term" value="F:ATP binding"/>
    <property type="evidence" value="ECO:0007669"/>
    <property type="project" value="UniProtKB-UniRule"/>
</dbReference>
<dbReference type="GO" id="GO:0016887">
    <property type="term" value="F:ATP hydrolysis activity"/>
    <property type="evidence" value="ECO:0007669"/>
    <property type="project" value="InterPro"/>
</dbReference>
<dbReference type="GO" id="GO:0003688">
    <property type="term" value="F:DNA replication origin binding"/>
    <property type="evidence" value="ECO:0007669"/>
    <property type="project" value="UniProtKB-UniRule"/>
</dbReference>
<dbReference type="GO" id="GO:0008289">
    <property type="term" value="F:lipid binding"/>
    <property type="evidence" value="ECO:0007669"/>
    <property type="project" value="UniProtKB-KW"/>
</dbReference>
<dbReference type="GO" id="GO:0006270">
    <property type="term" value="P:DNA replication initiation"/>
    <property type="evidence" value="ECO:0007669"/>
    <property type="project" value="UniProtKB-UniRule"/>
</dbReference>
<dbReference type="GO" id="GO:0006275">
    <property type="term" value="P:regulation of DNA replication"/>
    <property type="evidence" value="ECO:0007669"/>
    <property type="project" value="UniProtKB-UniRule"/>
</dbReference>
<dbReference type="CDD" id="cd00009">
    <property type="entry name" value="AAA"/>
    <property type="match status" value="1"/>
</dbReference>
<dbReference type="CDD" id="cd06571">
    <property type="entry name" value="Bac_DnaA_C"/>
    <property type="match status" value="1"/>
</dbReference>
<dbReference type="FunFam" id="1.10.8.60:FF:000003">
    <property type="entry name" value="Chromosomal replication initiator protein DnaA"/>
    <property type="match status" value="1"/>
</dbReference>
<dbReference type="FunFam" id="3.40.50.300:FF:000668">
    <property type="entry name" value="Chromosomal replication initiator protein DnaA"/>
    <property type="match status" value="1"/>
</dbReference>
<dbReference type="Gene3D" id="1.10.1750.10">
    <property type="match status" value="1"/>
</dbReference>
<dbReference type="Gene3D" id="1.10.8.60">
    <property type="match status" value="1"/>
</dbReference>
<dbReference type="Gene3D" id="3.30.300.180">
    <property type="match status" value="1"/>
</dbReference>
<dbReference type="Gene3D" id="3.40.50.300">
    <property type="entry name" value="P-loop containing nucleotide triphosphate hydrolases"/>
    <property type="match status" value="1"/>
</dbReference>
<dbReference type="HAMAP" id="MF_00377">
    <property type="entry name" value="DnaA_bact"/>
    <property type="match status" value="1"/>
</dbReference>
<dbReference type="InterPro" id="IPR003593">
    <property type="entry name" value="AAA+_ATPase"/>
</dbReference>
<dbReference type="InterPro" id="IPR001957">
    <property type="entry name" value="Chromosome_initiator_DnaA"/>
</dbReference>
<dbReference type="InterPro" id="IPR020591">
    <property type="entry name" value="Chromosome_initiator_DnaA-like"/>
</dbReference>
<dbReference type="InterPro" id="IPR018312">
    <property type="entry name" value="Chromosome_initiator_DnaA_CS"/>
</dbReference>
<dbReference type="InterPro" id="IPR013159">
    <property type="entry name" value="DnaA_C"/>
</dbReference>
<dbReference type="InterPro" id="IPR013317">
    <property type="entry name" value="DnaA_dom"/>
</dbReference>
<dbReference type="InterPro" id="IPR024633">
    <property type="entry name" value="DnaA_N_dom"/>
</dbReference>
<dbReference type="InterPro" id="IPR038454">
    <property type="entry name" value="DnaA_N_sf"/>
</dbReference>
<dbReference type="InterPro" id="IPR055199">
    <property type="entry name" value="Hda_lid"/>
</dbReference>
<dbReference type="InterPro" id="IPR027417">
    <property type="entry name" value="P-loop_NTPase"/>
</dbReference>
<dbReference type="InterPro" id="IPR010921">
    <property type="entry name" value="Trp_repressor/repl_initiator"/>
</dbReference>
<dbReference type="NCBIfam" id="TIGR00362">
    <property type="entry name" value="DnaA"/>
    <property type="match status" value="1"/>
</dbReference>
<dbReference type="PANTHER" id="PTHR30050">
    <property type="entry name" value="CHROMOSOMAL REPLICATION INITIATOR PROTEIN DNAA"/>
    <property type="match status" value="1"/>
</dbReference>
<dbReference type="PANTHER" id="PTHR30050:SF2">
    <property type="entry name" value="CHROMOSOMAL REPLICATION INITIATOR PROTEIN DNAA"/>
    <property type="match status" value="1"/>
</dbReference>
<dbReference type="Pfam" id="PF00308">
    <property type="entry name" value="Bac_DnaA"/>
    <property type="match status" value="1"/>
</dbReference>
<dbReference type="Pfam" id="PF08299">
    <property type="entry name" value="Bac_DnaA_C"/>
    <property type="match status" value="1"/>
</dbReference>
<dbReference type="Pfam" id="PF11638">
    <property type="entry name" value="DnaA_N"/>
    <property type="match status" value="1"/>
</dbReference>
<dbReference type="Pfam" id="PF22688">
    <property type="entry name" value="Hda_lid"/>
    <property type="match status" value="1"/>
</dbReference>
<dbReference type="PRINTS" id="PR00051">
    <property type="entry name" value="DNAA"/>
</dbReference>
<dbReference type="SMART" id="SM00382">
    <property type="entry name" value="AAA"/>
    <property type="match status" value="1"/>
</dbReference>
<dbReference type="SMART" id="SM00760">
    <property type="entry name" value="Bac_DnaA_C"/>
    <property type="match status" value="1"/>
</dbReference>
<dbReference type="SUPFAM" id="SSF52540">
    <property type="entry name" value="P-loop containing nucleoside triphosphate hydrolases"/>
    <property type="match status" value="1"/>
</dbReference>
<dbReference type="SUPFAM" id="SSF48295">
    <property type="entry name" value="TrpR-like"/>
    <property type="match status" value="1"/>
</dbReference>
<dbReference type="PROSITE" id="PS01008">
    <property type="entry name" value="DNAA"/>
    <property type="match status" value="1"/>
</dbReference>
<comment type="function">
    <text evidence="1">Plays an essential role in the initiation and regulation of chromosomal replication. ATP-DnaA binds to the origin of replication (oriC) to initiate formation of the DNA replication initiation complex once per cell cycle. Binds the DnaA box (a 9 base pair repeat at the origin) and separates the double-stranded (ds)DNA. Forms a right-handed helical filament on oriC DNA; dsDNA binds to the exterior of the filament while single-stranded (ss)DNA is stabiized in the filament's interior. The ATP-DnaA-oriC complex binds and stabilizes one strand of the AT-rich DNA unwinding element (DUE), permitting loading of DNA polymerase. After initiation quickly degrades to an ADP-DnaA complex that is not apt for DNA replication. Binds acidic phospholipids.</text>
</comment>
<comment type="subunit">
    <text evidence="1">Oligomerizes as a right-handed, spiral filament on DNA at oriC.</text>
</comment>
<comment type="subcellular location">
    <subcellularLocation>
        <location evidence="1">Cytoplasm</location>
    </subcellularLocation>
</comment>
<comment type="domain">
    <text evidence="1">Domain I is involved in oligomerization and binding regulators, domain II is flexibile and of varying length in different bacteria, domain III forms the AAA+ region, while domain IV binds dsDNA.</text>
</comment>
<comment type="similarity">
    <text evidence="1">Belongs to the DnaA family.</text>
</comment>
<sequence length="455" mass="51446">MLTCNDCSTWEQFVNYIKTRCSKTAFENWIAPIQVLEESREKIRLEIPNIFVQSYLLDNYKKDLCSFVPLDAEGNPALEFVVSEIKRSSPQIAASVTKPAVEVSEENKDFQLKLNGAYRFDNFIEGPSNQFVKSAALGIAARPGRSYNPLFIHGGVGLGKTHLLHAVGHYVREHHKNLRIHCITTEAFINDLVHHLRVKSIDKMKNFYRSLDLLLVDDIQFLQNRQNFEEEFCNTFETLIHLSKQIVVTSDKPPGQLKLSERIIARMEWGLVAHVGVPDLETRVAILQHKAEQKGLNIPNEIAFYIADHVYGNVRQLEGAINKLTAYCLLFNKPLTETTVRDTLKELFRTPSKQKVSVESILKSVATVFQVKIQDLKGTSRAKNVPLARQVAMYLAKTLITDSLVAIGAAFGKTHSTVLYACKTIEQKIEKDALLKNQISLCKNNIAIDSPQHFV</sequence>
<name>DNAA2_CHLMU</name>
<gene>
    <name evidence="1" type="primary">dnaA2</name>
    <name type="ordered locus">TC_0547</name>
</gene>
<accession>Q9PKB9</accession>
<proteinExistence type="inferred from homology"/>
<feature type="chain" id="PRO_0000114158" description="Chromosomal replication initiator protein DnaA 2">
    <location>
        <begin position="1"/>
        <end position="455"/>
    </location>
</feature>
<feature type="region of interest" description="Domain I, interacts with DnaA modulators" evidence="1">
    <location>
        <begin position="1"/>
        <end position="95"/>
    </location>
</feature>
<feature type="region of interest" description="Domain II" evidence="1">
    <location>
        <begin position="96"/>
        <end position="112"/>
    </location>
</feature>
<feature type="region of interest" description="Domain III, AAA+ region" evidence="1">
    <location>
        <begin position="113"/>
        <end position="328"/>
    </location>
</feature>
<feature type="region of interest" description="Domain IV, binds dsDNA" evidence="1">
    <location>
        <begin position="329"/>
        <end position="455"/>
    </location>
</feature>
<feature type="binding site" evidence="1">
    <location>
        <position position="157"/>
    </location>
    <ligand>
        <name>ATP</name>
        <dbReference type="ChEBI" id="CHEBI:30616"/>
    </ligand>
</feature>
<feature type="binding site" evidence="1">
    <location>
        <position position="159"/>
    </location>
    <ligand>
        <name>ATP</name>
        <dbReference type="ChEBI" id="CHEBI:30616"/>
    </ligand>
</feature>
<feature type="binding site" evidence="1">
    <location>
        <position position="160"/>
    </location>
    <ligand>
        <name>ATP</name>
        <dbReference type="ChEBI" id="CHEBI:30616"/>
    </ligand>
</feature>
<feature type="binding site" evidence="1">
    <location>
        <position position="161"/>
    </location>
    <ligand>
        <name>ATP</name>
        <dbReference type="ChEBI" id="CHEBI:30616"/>
    </ligand>
</feature>
<organism>
    <name type="scientific">Chlamydia muridarum (strain MoPn / Nigg)</name>
    <dbReference type="NCBI Taxonomy" id="243161"/>
    <lineage>
        <taxon>Bacteria</taxon>
        <taxon>Pseudomonadati</taxon>
        <taxon>Chlamydiota</taxon>
        <taxon>Chlamydiia</taxon>
        <taxon>Chlamydiales</taxon>
        <taxon>Chlamydiaceae</taxon>
        <taxon>Chlamydia/Chlamydophila group</taxon>
        <taxon>Chlamydia</taxon>
    </lineage>
</organism>
<evidence type="ECO:0000255" key="1">
    <source>
        <dbReference type="HAMAP-Rule" id="MF_00377"/>
    </source>
</evidence>
<keyword id="KW-0067">ATP-binding</keyword>
<keyword id="KW-0963">Cytoplasm</keyword>
<keyword id="KW-0235">DNA replication</keyword>
<keyword id="KW-0238">DNA-binding</keyword>
<keyword id="KW-0446">Lipid-binding</keyword>
<keyword id="KW-0547">Nucleotide-binding</keyword>